<evidence type="ECO:0000255" key="1">
    <source>
        <dbReference type="HAMAP-Rule" id="MF_00505"/>
    </source>
</evidence>
<evidence type="ECO:0000305" key="2"/>
<comment type="function">
    <text evidence="1">Molecular chaperone. Has ATPase activity.</text>
</comment>
<comment type="subunit">
    <text evidence="1">Homodimer.</text>
</comment>
<comment type="subcellular location">
    <subcellularLocation>
        <location evidence="1">Cytoplasm</location>
    </subcellularLocation>
</comment>
<comment type="similarity">
    <text evidence="1">Belongs to the heat shock protein 90 family.</text>
</comment>
<comment type="sequence caution" evidence="2">
    <conflict type="erroneous initiation">
        <sequence resource="EMBL-CDS" id="AAX64434"/>
    </conflict>
</comment>
<sequence>MKGQETRGFQSEVKQLLHLMIHSLYSNKEIFLRELISNASDAADKLRFRALSNPDLYEGDGELRVRVSFDKDKRTLTIADNGVGMNRDEVIDHLGTIAKSGTKSFLESMGSDQAKDSQLIGQFGVGFYSAFIVADKVTVRTRAAGDKPENGVFWESAGEGEYTVADITKNDRGTEITLHLREGEDEFLDDWRVRSIISKYSDHIALPVEIEKREEKDGETVISWEKINKAQALWTRNKSEIKDDEYNEFYKHIAHDFTDPLTWSHNRVEGKQEYTSLLYIPSQAPWDLWNRDHKHGLKLYVQRVFIMDDAEQFMPNYLRFVRGLIDSNDLPLNVSREILQDSTVTRNLRSALTKRVLQMLEKLAKDDAEKYQTFWKQFGLVLKEGPAEDHANQEAIAKLLRFASTHTDSSAQTVSLEDYVSRMKEGQEKIYYITADSYAAAKNSPHLELLRKKGIEVLLLSDRIDEWMMNYLTEFDGKAFQSVAKADESIEKLADEVDENAKEAEKVLEPFVERVKTLLGDRVKDVRLTHRLTDTPAIVTTDADEMSTQMAKLFAAAGQSVPEVKYIFELNPDHVLVKRTADTKDEAQFKEWVELLLDQALFAERGTLEDPNQFIRRMNQLLVS</sequence>
<dbReference type="EMBL" id="AE017220">
    <property type="protein sequence ID" value="AAX64434.1"/>
    <property type="status" value="ALT_INIT"/>
    <property type="molecule type" value="Genomic_DNA"/>
</dbReference>
<dbReference type="SMR" id="Q57S77"/>
<dbReference type="KEGG" id="sec:SCH_0528"/>
<dbReference type="HOGENOM" id="CLU_006684_3_0_6"/>
<dbReference type="Proteomes" id="UP000000538">
    <property type="component" value="Chromosome"/>
</dbReference>
<dbReference type="GO" id="GO:0005737">
    <property type="term" value="C:cytoplasm"/>
    <property type="evidence" value="ECO:0007669"/>
    <property type="project" value="UniProtKB-SubCell"/>
</dbReference>
<dbReference type="GO" id="GO:0005524">
    <property type="term" value="F:ATP binding"/>
    <property type="evidence" value="ECO:0007669"/>
    <property type="project" value="UniProtKB-UniRule"/>
</dbReference>
<dbReference type="GO" id="GO:0016887">
    <property type="term" value="F:ATP hydrolysis activity"/>
    <property type="evidence" value="ECO:0007669"/>
    <property type="project" value="InterPro"/>
</dbReference>
<dbReference type="GO" id="GO:0140662">
    <property type="term" value="F:ATP-dependent protein folding chaperone"/>
    <property type="evidence" value="ECO:0007669"/>
    <property type="project" value="InterPro"/>
</dbReference>
<dbReference type="GO" id="GO:0051082">
    <property type="term" value="F:unfolded protein binding"/>
    <property type="evidence" value="ECO:0007669"/>
    <property type="project" value="UniProtKB-UniRule"/>
</dbReference>
<dbReference type="CDD" id="cd16927">
    <property type="entry name" value="HATPase_Hsp90-like"/>
    <property type="match status" value="1"/>
</dbReference>
<dbReference type="FunFam" id="1.20.120.790:FF:000002">
    <property type="entry name" value="Molecular chaperone HtpG"/>
    <property type="match status" value="1"/>
</dbReference>
<dbReference type="FunFam" id="3.30.230.80:FF:000002">
    <property type="entry name" value="Molecular chaperone HtpG"/>
    <property type="match status" value="1"/>
</dbReference>
<dbReference type="FunFam" id="3.30.565.10:FF:000009">
    <property type="entry name" value="Molecular chaperone HtpG"/>
    <property type="match status" value="1"/>
</dbReference>
<dbReference type="FunFam" id="3.40.50.11260:FF:000002">
    <property type="entry name" value="Molecular chaperone HtpG"/>
    <property type="match status" value="1"/>
</dbReference>
<dbReference type="Gene3D" id="3.30.230.80">
    <property type="match status" value="1"/>
</dbReference>
<dbReference type="Gene3D" id="3.40.50.11260">
    <property type="match status" value="1"/>
</dbReference>
<dbReference type="Gene3D" id="1.20.120.790">
    <property type="entry name" value="Heat shock protein 90, C-terminal domain"/>
    <property type="match status" value="1"/>
</dbReference>
<dbReference type="Gene3D" id="3.30.565.10">
    <property type="entry name" value="Histidine kinase-like ATPase, C-terminal domain"/>
    <property type="match status" value="1"/>
</dbReference>
<dbReference type="HAMAP" id="MF_00505">
    <property type="entry name" value="HSP90"/>
    <property type="match status" value="1"/>
</dbReference>
<dbReference type="InterPro" id="IPR036890">
    <property type="entry name" value="HATPase_C_sf"/>
</dbReference>
<dbReference type="InterPro" id="IPR019805">
    <property type="entry name" value="Heat_shock_protein_90_CS"/>
</dbReference>
<dbReference type="InterPro" id="IPR037196">
    <property type="entry name" value="HSP90_C"/>
</dbReference>
<dbReference type="InterPro" id="IPR001404">
    <property type="entry name" value="Hsp90_fam"/>
</dbReference>
<dbReference type="InterPro" id="IPR020575">
    <property type="entry name" value="Hsp90_N"/>
</dbReference>
<dbReference type="InterPro" id="IPR020568">
    <property type="entry name" value="Ribosomal_Su5_D2-typ_SF"/>
</dbReference>
<dbReference type="NCBIfam" id="NF003555">
    <property type="entry name" value="PRK05218.1"/>
    <property type="match status" value="1"/>
</dbReference>
<dbReference type="PANTHER" id="PTHR11528">
    <property type="entry name" value="HEAT SHOCK PROTEIN 90 FAMILY MEMBER"/>
    <property type="match status" value="1"/>
</dbReference>
<dbReference type="Pfam" id="PF13589">
    <property type="entry name" value="HATPase_c_3"/>
    <property type="match status" value="1"/>
</dbReference>
<dbReference type="Pfam" id="PF00183">
    <property type="entry name" value="HSP90"/>
    <property type="match status" value="1"/>
</dbReference>
<dbReference type="PIRSF" id="PIRSF002583">
    <property type="entry name" value="Hsp90"/>
    <property type="match status" value="1"/>
</dbReference>
<dbReference type="PRINTS" id="PR00775">
    <property type="entry name" value="HEATSHOCK90"/>
</dbReference>
<dbReference type="SMART" id="SM00387">
    <property type="entry name" value="HATPase_c"/>
    <property type="match status" value="1"/>
</dbReference>
<dbReference type="SUPFAM" id="SSF55874">
    <property type="entry name" value="ATPase domain of HSP90 chaperone/DNA topoisomerase II/histidine kinase"/>
    <property type="match status" value="1"/>
</dbReference>
<dbReference type="SUPFAM" id="SSF110942">
    <property type="entry name" value="HSP90 C-terminal domain"/>
    <property type="match status" value="1"/>
</dbReference>
<dbReference type="SUPFAM" id="SSF54211">
    <property type="entry name" value="Ribosomal protein S5 domain 2-like"/>
    <property type="match status" value="1"/>
</dbReference>
<dbReference type="PROSITE" id="PS00298">
    <property type="entry name" value="HSP90"/>
    <property type="match status" value="1"/>
</dbReference>
<accession>Q57S77</accession>
<gene>
    <name evidence="1" type="primary">htpG</name>
    <name type="ordered locus">SCH_0528</name>
</gene>
<feature type="chain" id="PRO_0000224229" description="Chaperone protein HtpG">
    <location>
        <begin position="1"/>
        <end position="624"/>
    </location>
</feature>
<feature type="region of interest" description="A; substrate-binding" evidence="1">
    <location>
        <begin position="1"/>
        <end position="336"/>
    </location>
</feature>
<feature type="region of interest" description="B" evidence="1">
    <location>
        <begin position="337"/>
        <end position="552"/>
    </location>
</feature>
<feature type="region of interest" description="C" evidence="1">
    <location>
        <begin position="553"/>
        <end position="624"/>
    </location>
</feature>
<reference key="1">
    <citation type="journal article" date="2005" name="Nucleic Acids Res.">
        <title>The genome sequence of Salmonella enterica serovar Choleraesuis, a highly invasive and resistant zoonotic pathogen.</title>
        <authorList>
            <person name="Chiu C.-H."/>
            <person name="Tang P."/>
            <person name="Chu C."/>
            <person name="Hu S."/>
            <person name="Bao Q."/>
            <person name="Yu J."/>
            <person name="Chou Y.-Y."/>
            <person name="Wang H.-S."/>
            <person name="Lee Y.-S."/>
        </authorList>
    </citation>
    <scope>NUCLEOTIDE SEQUENCE [LARGE SCALE GENOMIC DNA]</scope>
    <source>
        <strain>SC-B67</strain>
    </source>
</reference>
<keyword id="KW-0067">ATP-binding</keyword>
<keyword id="KW-0143">Chaperone</keyword>
<keyword id="KW-0963">Cytoplasm</keyword>
<keyword id="KW-0547">Nucleotide-binding</keyword>
<keyword id="KW-0346">Stress response</keyword>
<proteinExistence type="inferred from homology"/>
<protein>
    <recommendedName>
        <fullName evidence="1">Chaperone protein HtpG</fullName>
    </recommendedName>
    <alternativeName>
        <fullName evidence="1">Heat shock protein HtpG</fullName>
    </alternativeName>
    <alternativeName>
        <fullName evidence="1">High temperature protein G</fullName>
    </alternativeName>
</protein>
<name>HTPG_SALCH</name>
<organism>
    <name type="scientific">Salmonella choleraesuis (strain SC-B67)</name>
    <dbReference type="NCBI Taxonomy" id="321314"/>
    <lineage>
        <taxon>Bacteria</taxon>
        <taxon>Pseudomonadati</taxon>
        <taxon>Pseudomonadota</taxon>
        <taxon>Gammaproteobacteria</taxon>
        <taxon>Enterobacterales</taxon>
        <taxon>Enterobacteriaceae</taxon>
        <taxon>Salmonella</taxon>
    </lineage>
</organism>